<organism>
    <name type="scientific">Streptococcus thermophilus (strain CNRZ 1066)</name>
    <dbReference type="NCBI Taxonomy" id="299768"/>
    <lineage>
        <taxon>Bacteria</taxon>
        <taxon>Bacillati</taxon>
        <taxon>Bacillota</taxon>
        <taxon>Bacilli</taxon>
        <taxon>Lactobacillales</taxon>
        <taxon>Streptococcaceae</taxon>
        <taxon>Streptococcus</taxon>
    </lineage>
</organism>
<proteinExistence type="inferred from homology"/>
<protein>
    <recommendedName>
        <fullName evidence="1">GTPase Der</fullName>
    </recommendedName>
    <alternativeName>
        <fullName evidence="1">GTP-binding protein EngA</fullName>
    </alternativeName>
</protein>
<dbReference type="EMBL" id="CP000024">
    <property type="protein sequence ID" value="AAV61925.1"/>
    <property type="molecule type" value="Genomic_DNA"/>
</dbReference>
<dbReference type="RefSeq" id="WP_011225483.1">
    <property type="nucleotide sequence ID" value="NC_006449.1"/>
</dbReference>
<dbReference type="SMR" id="Q5M1D9"/>
<dbReference type="GeneID" id="66898242"/>
<dbReference type="KEGG" id="stc:str0322"/>
<dbReference type="HOGENOM" id="CLU_016077_6_2_9"/>
<dbReference type="GO" id="GO:0005525">
    <property type="term" value="F:GTP binding"/>
    <property type="evidence" value="ECO:0007669"/>
    <property type="project" value="UniProtKB-UniRule"/>
</dbReference>
<dbReference type="GO" id="GO:0043022">
    <property type="term" value="F:ribosome binding"/>
    <property type="evidence" value="ECO:0007669"/>
    <property type="project" value="TreeGrafter"/>
</dbReference>
<dbReference type="GO" id="GO:0042254">
    <property type="term" value="P:ribosome biogenesis"/>
    <property type="evidence" value="ECO:0007669"/>
    <property type="project" value="UniProtKB-KW"/>
</dbReference>
<dbReference type="CDD" id="cd01894">
    <property type="entry name" value="EngA1"/>
    <property type="match status" value="1"/>
</dbReference>
<dbReference type="CDD" id="cd01895">
    <property type="entry name" value="EngA2"/>
    <property type="match status" value="1"/>
</dbReference>
<dbReference type="FunFam" id="3.30.300.20:FF:000004">
    <property type="entry name" value="GTPase Der"/>
    <property type="match status" value="1"/>
</dbReference>
<dbReference type="FunFam" id="3.40.50.300:FF:000040">
    <property type="entry name" value="GTPase Der"/>
    <property type="match status" value="1"/>
</dbReference>
<dbReference type="FunFam" id="3.40.50.300:FF:000057">
    <property type="entry name" value="GTPase Der"/>
    <property type="match status" value="1"/>
</dbReference>
<dbReference type="Gene3D" id="3.30.300.20">
    <property type="match status" value="1"/>
</dbReference>
<dbReference type="Gene3D" id="3.40.50.300">
    <property type="entry name" value="P-loop containing nucleotide triphosphate hydrolases"/>
    <property type="match status" value="2"/>
</dbReference>
<dbReference type="HAMAP" id="MF_00195">
    <property type="entry name" value="GTPase_Der"/>
    <property type="match status" value="1"/>
</dbReference>
<dbReference type="InterPro" id="IPR031166">
    <property type="entry name" value="G_ENGA"/>
</dbReference>
<dbReference type="InterPro" id="IPR006073">
    <property type="entry name" value="GTP-bd"/>
</dbReference>
<dbReference type="InterPro" id="IPR016484">
    <property type="entry name" value="GTPase_Der"/>
</dbReference>
<dbReference type="InterPro" id="IPR032859">
    <property type="entry name" value="KH_dom-like"/>
</dbReference>
<dbReference type="InterPro" id="IPR015946">
    <property type="entry name" value="KH_dom-like_a/b"/>
</dbReference>
<dbReference type="InterPro" id="IPR027417">
    <property type="entry name" value="P-loop_NTPase"/>
</dbReference>
<dbReference type="InterPro" id="IPR005225">
    <property type="entry name" value="Small_GTP-bd"/>
</dbReference>
<dbReference type="NCBIfam" id="TIGR03594">
    <property type="entry name" value="GTPase_EngA"/>
    <property type="match status" value="1"/>
</dbReference>
<dbReference type="NCBIfam" id="TIGR00231">
    <property type="entry name" value="small_GTP"/>
    <property type="match status" value="2"/>
</dbReference>
<dbReference type="PANTHER" id="PTHR43834">
    <property type="entry name" value="GTPASE DER"/>
    <property type="match status" value="1"/>
</dbReference>
<dbReference type="PANTHER" id="PTHR43834:SF6">
    <property type="entry name" value="GTPASE DER"/>
    <property type="match status" value="1"/>
</dbReference>
<dbReference type="Pfam" id="PF14714">
    <property type="entry name" value="KH_dom-like"/>
    <property type="match status" value="1"/>
</dbReference>
<dbReference type="Pfam" id="PF01926">
    <property type="entry name" value="MMR_HSR1"/>
    <property type="match status" value="2"/>
</dbReference>
<dbReference type="PIRSF" id="PIRSF006485">
    <property type="entry name" value="GTP-binding_EngA"/>
    <property type="match status" value="1"/>
</dbReference>
<dbReference type="SUPFAM" id="SSF52540">
    <property type="entry name" value="P-loop containing nucleoside triphosphate hydrolases"/>
    <property type="match status" value="2"/>
</dbReference>
<dbReference type="PROSITE" id="PS51712">
    <property type="entry name" value="G_ENGA"/>
    <property type="match status" value="2"/>
</dbReference>
<sequence length="436" mass="48743">MTLPTVAIVGRPNVGKSTLFNRIAGERISIVEDVEGVTRDRIYTSAEWLNRQFSLIDTGGIDDVDAPFMEQIKHQAGIAMTEADVIVFVVSGKEGVTDADEYVARILYKTNKPVILAVNKVDNPEMRADIYDFYSLGLGDPYPVSSVHGIGTGDVLDAIVGNLPTEVEEENPDIIRFSLIGRPNVGKSSLINAILGEDRVIASPIAGTTRDAIDTNFVDSEGQEYTMIDTAGMRKSGKVYENTEKYSIMRSMRAIDRSDVVLMVINAEEGIREYDKRIAGFAHEAGKGIIIVVNKWDTIKKDNHTVANWEADIRDQFQFLSYAPIVFVSAKTKQRLNKLPEMIKRISESQNRRISSAVLNDVIMDAIAINPTPTDKGKRLKIFYGTQVSVKPPTFVIFVNEEELMHFSYMRFLENQIRQAFGFEGTPIHLIARKRK</sequence>
<feature type="chain" id="PRO_1000011762" description="GTPase Der">
    <location>
        <begin position="1"/>
        <end position="436"/>
    </location>
</feature>
<feature type="domain" description="EngA-type G 1">
    <location>
        <begin position="4"/>
        <end position="167"/>
    </location>
</feature>
<feature type="domain" description="EngA-type G 2">
    <location>
        <begin position="175"/>
        <end position="351"/>
    </location>
</feature>
<feature type="domain" description="KH-like" evidence="1">
    <location>
        <begin position="352"/>
        <end position="436"/>
    </location>
</feature>
<feature type="binding site" evidence="1">
    <location>
        <begin position="10"/>
        <end position="17"/>
    </location>
    <ligand>
        <name>GTP</name>
        <dbReference type="ChEBI" id="CHEBI:37565"/>
        <label>1</label>
    </ligand>
</feature>
<feature type="binding site" evidence="1">
    <location>
        <begin position="57"/>
        <end position="61"/>
    </location>
    <ligand>
        <name>GTP</name>
        <dbReference type="ChEBI" id="CHEBI:37565"/>
        <label>1</label>
    </ligand>
</feature>
<feature type="binding site" evidence="1">
    <location>
        <begin position="119"/>
        <end position="122"/>
    </location>
    <ligand>
        <name>GTP</name>
        <dbReference type="ChEBI" id="CHEBI:37565"/>
        <label>1</label>
    </ligand>
</feature>
<feature type="binding site" evidence="1">
    <location>
        <begin position="181"/>
        <end position="188"/>
    </location>
    <ligand>
        <name>GTP</name>
        <dbReference type="ChEBI" id="CHEBI:37565"/>
        <label>2</label>
    </ligand>
</feature>
<feature type="binding site" evidence="1">
    <location>
        <begin position="229"/>
        <end position="233"/>
    </location>
    <ligand>
        <name>GTP</name>
        <dbReference type="ChEBI" id="CHEBI:37565"/>
        <label>2</label>
    </ligand>
</feature>
<feature type="binding site" evidence="1">
    <location>
        <begin position="294"/>
        <end position="297"/>
    </location>
    <ligand>
        <name>GTP</name>
        <dbReference type="ChEBI" id="CHEBI:37565"/>
        <label>2</label>
    </ligand>
</feature>
<reference key="1">
    <citation type="journal article" date="2004" name="Nat. Biotechnol.">
        <title>Complete sequence and comparative genome analysis of the dairy bacterium Streptococcus thermophilus.</title>
        <authorList>
            <person name="Bolotin A."/>
            <person name="Quinquis B."/>
            <person name="Renault P."/>
            <person name="Sorokin A."/>
            <person name="Ehrlich S.D."/>
            <person name="Kulakauskas S."/>
            <person name="Lapidus A."/>
            <person name="Goltsman E."/>
            <person name="Mazur M."/>
            <person name="Pusch G.D."/>
            <person name="Fonstein M."/>
            <person name="Overbeek R."/>
            <person name="Kyprides N."/>
            <person name="Purnelle B."/>
            <person name="Prozzi D."/>
            <person name="Ngui K."/>
            <person name="Masuy D."/>
            <person name="Hancy F."/>
            <person name="Burteau S."/>
            <person name="Boutry M."/>
            <person name="Delcour J."/>
            <person name="Goffeau A."/>
            <person name="Hols P."/>
        </authorList>
    </citation>
    <scope>NUCLEOTIDE SEQUENCE [LARGE SCALE GENOMIC DNA]</scope>
    <source>
        <strain>CNRZ 1066</strain>
    </source>
</reference>
<gene>
    <name evidence="1" type="primary">der</name>
    <name type="synonym">engA</name>
    <name type="ordered locus">str0322</name>
</gene>
<name>DER_STRT1</name>
<comment type="function">
    <text evidence="1">GTPase that plays an essential role in the late steps of ribosome biogenesis.</text>
</comment>
<comment type="subunit">
    <text evidence="1">Associates with the 50S ribosomal subunit.</text>
</comment>
<comment type="similarity">
    <text evidence="1">Belongs to the TRAFAC class TrmE-Era-EngA-EngB-Septin-like GTPase superfamily. EngA (Der) GTPase family.</text>
</comment>
<accession>Q5M1D9</accession>
<keyword id="KW-0342">GTP-binding</keyword>
<keyword id="KW-0547">Nucleotide-binding</keyword>
<keyword id="KW-0677">Repeat</keyword>
<keyword id="KW-0690">Ribosome biogenesis</keyword>
<evidence type="ECO:0000255" key="1">
    <source>
        <dbReference type="HAMAP-Rule" id="MF_00195"/>
    </source>
</evidence>